<accession>P53107</accession>
<accession>D6VTY7</accession>
<accession>Q6LDS2</accession>
<name>YRB30_YEAST</name>
<gene>
    <name type="primary">YRB30</name>
    <name type="ordered locus">YGL164C</name>
    <name type="ORF">G1817</name>
</gene>
<sequence length="440" mass="50296">MDEILAKAGSQAVTFAIKSGISIASTYALKTITNFVVQIPKDDARRIDQLKFKLESRMAIVSSAIDLIKLVAARGNTNLQITLRLTKDLKEEIDRFDEKINEMTQKVEGSRSAKTQNEAIKAVENYIKDLLLRIEEITPFINLSLTTSGANLNSALPYQLSPGLLLKASDFVSENNRKYEKAMKSNEKGTGDKEILKVQVGPTFEVTLFSIFYNLTSENNGQSGIVWKEDMKRAKARIYRLNSTGRKYDYFMKIEQDFNDGRYHEDDDKEDTPQELAIDLNHIKKLFFSVSGKLLRLEEQDSPVLVLKIDRSDDKENESSEGDKGLLDDITWYAVSGYEAIEEDEEEDEEEDEEEGKDGEERKEEEEEENKLEDKDSSITLLEYIIRLTSLQSNDQKSILEVSDERLSIYLNDENTNSRKDRISNSTIEETEKKLKNLKL</sequence>
<organism>
    <name type="scientific">Saccharomyces cerevisiae (strain ATCC 204508 / S288c)</name>
    <name type="common">Baker's yeast</name>
    <dbReference type="NCBI Taxonomy" id="559292"/>
    <lineage>
        <taxon>Eukaryota</taxon>
        <taxon>Fungi</taxon>
        <taxon>Dikarya</taxon>
        <taxon>Ascomycota</taxon>
        <taxon>Saccharomycotina</taxon>
        <taxon>Saccharomycetes</taxon>
        <taxon>Saccharomycetales</taxon>
        <taxon>Saccharomycetaceae</taxon>
        <taxon>Saccharomyces</taxon>
    </lineage>
</organism>
<dbReference type="EMBL" id="Z48618">
    <property type="status" value="NOT_ANNOTATED_CDS"/>
    <property type="molecule type" value="Genomic_DNA"/>
</dbReference>
<dbReference type="EMBL" id="Z72686">
    <property type="protein sequence ID" value="CAA96876.1"/>
    <property type="molecule type" value="Genomic_DNA"/>
</dbReference>
<dbReference type="EMBL" id="M22580">
    <property type="protein sequence ID" value="AAA66315.1"/>
    <property type="molecule type" value="Genomic_DNA"/>
</dbReference>
<dbReference type="EMBL" id="BK006941">
    <property type="protein sequence ID" value="DAA07948.1"/>
    <property type="molecule type" value="Genomic_DNA"/>
</dbReference>
<dbReference type="PIR" id="S60423">
    <property type="entry name" value="S60423"/>
</dbReference>
<dbReference type="RefSeq" id="NP_011351.1">
    <property type="nucleotide sequence ID" value="NM_001181029.1"/>
</dbReference>
<dbReference type="SMR" id="P53107"/>
<dbReference type="BioGRID" id="33089">
    <property type="interactions" value="65"/>
</dbReference>
<dbReference type="FunCoup" id="P53107">
    <property type="interactions" value="23"/>
</dbReference>
<dbReference type="IntAct" id="P53107">
    <property type="interactions" value="2"/>
</dbReference>
<dbReference type="MINT" id="P53107"/>
<dbReference type="STRING" id="4932.YGL164C"/>
<dbReference type="iPTMnet" id="P53107"/>
<dbReference type="PaxDb" id="4932-YGL164C"/>
<dbReference type="PeptideAtlas" id="P53107"/>
<dbReference type="EnsemblFungi" id="YGL164C_mRNA">
    <property type="protein sequence ID" value="YGL164C"/>
    <property type="gene ID" value="YGL164C"/>
</dbReference>
<dbReference type="GeneID" id="852712"/>
<dbReference type="KEGG" id="sce:YGL164C"/>
<dbReference type="AGR" id="SGD:S000003132"/>
<dbReference type="SGD" id="S000003132">
    <property type="gene designation" value="YRB30"/>
</dbReference>
<dbReference type="VEuPathDB" id="FungiDB:YGL164C"/>
<dbReference type="eggNOG" id="ENOG502R7I3">
    <property type="taxonomic scope" value="Eukaryota"/>
</dbReference>
<dbReference type="HOGENOM" id="CLU_014536_0_0_1"/>
<dbReference type="InParanoid" id="P53107"/>
<dbReference type="OMA" id="QSMFFTA"/>
<dbReference type="OrthoDB" id="512915at2759"/>
<dbReference type="BioCyc" id="YEAST:G3O-30653-MONOMER"/>
<dbReference type="BioGRID-ORCS" id="852712">
    <property type="hits" value="5 hits in 10 CRISPR screens"/>
</dbReference>
<dbReference type="PRO" id="PR:P53107"/>
<dbReference type="Proteomes" id="UP000002311">
    <property type="component" value="Chromosome VII"/>
</dbReference>
<dbReference type="RNAct" id="P53107">
    <property type="molecule type" value="protein"/>
</dbReference>
<dbReference type="GO" id="GO:0005737">
    <property type="term" value="C:cytoplasm"/>
    <property type="evidence" value="ECO:0000314"/>
    <property type="project" value="SGD"/>
</dbReference>
<dbReference type="GO" id="GO:0005634">
    <property type="term" value="C:nucleus"/>
    <property type="evidence" value="ECO:0000315"/>
    <property type="project" value="SGD"/>
</dbReference>
<dbReference type="GO" id="GO:0005096">
    <property type="term" value="F:GTPase activator activity"/>
    <property type="evidence" value="ECO:0007669"/>
    <property type="project" value="UniProtKB-KW"/>
</dbReference>
<dbReference type="GO" id="GO:0030695">
    <property type="term" value="F:GTPase regulator activity"/>
    <property type="evidence" value="ECO:0000314"/>
    <property type="project" value="SGD"/>
</dbReference>
<dbReference type="GO" id="GO:0015031">
    <property type="term" value="P:protein transport"/>
    <property type="evidence" value="ECO:0007669"/>
    <property type="project" value="UniProtKB-KW"/>
</dbReference>
<dbReference type="InterPro" id="IPR008812">
    <property type="entry name" value="Ran_GTP-bd-rel"/>
</dbReference>
<dbReference type="PANTHER" id="PTHR31010:SF2">
    <property type="entry name" value="RAN-SPECIFIC GTPASE-ACTIVATING PROTEIN 30"/>
    <property type="match status" value="1"/>
</dbReference>
<dbReference type="PANTHER" id="PTHR31010">
    <property type="entry name" value="RAN-SPECIFIC GTPASE-ACTIVATING PROTEIN 30-RELATED"/>
    <property type="match status" value="1"/>
</dbReference>
<dbReference type="Pfam" id="PF05508">
    <property type="entry name" value="Ran-binding"/>
    <property type="match status" value="1"/>
</dbReference>
<reference key="1">
    <citation type="journal article" date="1995" name="Yeast">
        <title>DNA sequence analysis of a 35 kb segment from Saccharomyces cerevisiae chromosome VII reveals 19 open reading frames including RAD54, ACE1/CUP2, PMR1, RCK1, AMS1 and CAL1/CDC43.</title>
        <authorList>
            <person name="James C.M."/>
            <person name="Indge K.J."/>
            <person name="Oliver S.G."/>
        </authorList>
    </citation>
    <scope>NUCLEOTIDE SEQUENCE [GENOMIC DNA]</scope>
</reference>
<reference key="2">
    <citation type="journal article" date="1997" name="Nature">
        <title>The nucleotide sequence of Saccharomyces cerevisiae chromosome VII.</title>
        <authorList>
            <person name="Tettelin H."/>
            <person name="Agostoni-Carbone M.L."/>
            <person name="Albermann K."/>
            <person name="Albers M."/>
            <person name="Arroyo J."/>
            <person name="Backes U."/>
            <person name="Barreiros T."/>
            <person name="Bertani I."/>
            <person name="Bjourson A.J."/>
            <person name="Brueckner M."/>
            <person name="Bruschi C.V."/>
            <person name="Carignani G."/>
            <person name="Castagnoli L."/>
            <person name="Cerdan E."/>
            <person name="Clemente M.L."/>
            <person name="Coblenz A."/>
            <person name="Coglievina M."/>
            <person name="Coissac E."/>
            <person name="Defoor E."/>
            <person name="Del Bino S."/>
            <person name="Delius H."/>
            <person name="Delneri D."/>
            <person name="de Wergifosse P."/>
            <person name="Dujon B."/>
            <person name="Durand P."/>
            <person name="Entian K.-D."/>
            <person name="Eraso P."/>
            <person name="Escribano V."/>
            <person name="Fabiani L."/>
            <person name="Fartmann B."/>
            <person name="Feroli F."/>
            <person name="Feuermann M."/>
            <person name="Frontali L."/>
            <person name="Garcia-Gonzalez M."/>
            <person name="Garcia-Saez M.I."/>
            <person name="Goffeau A."/>
            <person name="Guerreiro P."/>
            <person name="Hani J."/>
            <person name="Hansen M."/>
            <person name="Hebling U."/>
            <person name="Hernandez K."/>
            <person name="Heumann K."/>
            <person name="Hilger F."/>
            <person name="Hofmann B."/>
            <person name="Indge K.J."/>
            <person name="James C.M."/>
            <person name="Klima R."/>
            <person name="Koetter P."/>
            <person name="Kramer B."/>
            <person name="Kramer W."/>
            <person name="Lauquin G."/>
            <person name="Leuther H."/>
            <person name="Louis E.J."/>
            <person name="Maillier E."/>
            <person name="Marconi A."/>
            <person name="Martegani E."/>
            <person name="Mazon M.J."/>
            <person name="Mazzoni C."/>
            <person name="McReynolds A.D.K."/>
            <person name="Melchioretto P."/>
            <person name="Mewes H.-W."/>
            <person name="Minenkova O."/>
            <person name="Mueller-Auer S."/>
            <person name="Nawrocki A."/>
            <person name="Netter P."/>
            <person name="Neu R."/>
            <person name="Nombela C."/>
            <person name="Oliver S.G."/>
            <person name="Panzeri L."/>
            <person name="Paoluzi S."/>
            <person name="Plevani P."/>
            <person name="Portetelle D."/>
            <person name="Portillo F."/>
            <person name="Potier S."/>
            <person name="Purnelle B."/>
            <person name="Rieger M."/>
            <person name="Riles L."/>
            <person name="Rinaldi T."/>
            <person name="Robben J."/>
            <person name="Rodrigues-Pousada C."/>
            <person name="Rodriguez-Belmonte E."/>
            <person name="Rodriguez-Torres A.M."/>
            <person name="Rose M."/>
            <person name="Ruzzi M."/>
            <person name="Saliola M."/>
            <person name="Sanchez-Perez M."/>
            <person name="Schaefer B."/>
            <person name="Schaefer M."/>
            <person name="Scharfe M."/>
            <person name="Schmidheini T."/>
            <person name="Schreer A."/>
            <person name="Skala J."/>
            <person name="Souciet J.-L."/>
            <person name="Steensma H.Y."/>
            <person name="Talla E."/>
            <person name="Thierry A."/>
            <person name="Vandenbol M."/>
            <person name="van der Aart Q.J.M."/>
            <person name="Van Dyck L."/>
            <person name="Vanoni M."/>
            <person name="Verhasselt P."/>
            <person name="Voet M."/>
            <person name="Volckaert G."/>
            <person name="Wambutt R."/>
            <person name="Watson M.D."/>
            <person name="Weber N."/>
            <person name="Wedler E."/>
            <person name="Wedler H."/>
            <person name="Wipfli P."/>
            <person name="Wolf K."/>
            <person name="Wright L.F."/>
            <person name="Zaccaria P."/>
            <person name="Zimmermann M."/>
            <person name="Zollner A."/>
            <person name="Kleine K."/>
        </authorList>
    </citation>
    <scope>NUCLEOTIDE SEQUENCE [LARGE SCALE GENOMIC DNA]</scope>
    <source>
        <strain>ATCC 204508 / S288c</strain>
    </source>
</reference>
<reference key="3">
    <citation type="journal article" date="2014" name="G3 (Bethesda)">
        <title>The reference genome sequence of Saccharomyces cerevisiae: Then and now.</title>
        <authorList>
            <person name="Engel S.R."/>
            <person name="Dietrich F.S."/>
            <person name="Fisk D.G."/>
            <person name="Binkley G."/>
            <person name="Balakrishnan R."/>
            <person name="Costanzo M.C."/>
            <person name="Dwight S.S."/>
            <person name="Hitz B.C."/>
            <person name="Karra K."/>
            <person name="Nash R.S."/>
            <person name="Weng S."/>
            <person name="Wong E.D."/>
            <person name="Lloyd P."/>
            <person name="Skrzypek M.S."/>
            <person name="Miyasato S.R."/>
            <person name="Simison M."/>
            <person name="Cherry J.M."/>
        </authorList>
    </citation>
    <scope>GENOME REANNOTATION</scope>
    <source>
        <strain>ATCC 204508 / S288c</strain>
    </source>
</reference>
<reference key="4">
    <citation type="journal article" date="1988" name="Cell">
        <title>Copper activates metallothionein gene transcription by altering the conformation of a specific DNA binding protein.</title>
        <authorList>
            <person name="Fuerst P."/>
            <person name="Hu S."/>
            <person name="Hackett R."/>
            <person name="Hamer D."/>
        </authorList>
    </citation>
    <scope>NUCLEOTIDE SEQUENCE [GENOMIC DNA] OF 231-440</scope>
</reference>
<reference key="5">
    <citation type="journal article" date="2003" name="J. Biol. Chem.">
        <title>Identification and characterization of a novel RanGTP-binding protein in the yeast Saccharomyces cerevisiae.</title>
        <authorList>
            <person name="Braunwarth A."/>
            <person name="Fromont-Racine M."/>
            <person name="Legrain P."/>
            <person name="Bischoff F.R."/>
            <person name="Gerstberger T."/>
            <person name="Hurt E."/>
            <person name="Kuenzler M."/>
        </authorList>
    </citation>
    <scope>FUNCTION</scope>
    <scope>INTERACTION WITH GSP1</scope>
    <scope>SUBCELLULAR LOCATION</scope>
</reference>
<reference key="6">
    <citation type="journal article" date="2003" name="Nature">
        <title>Global analysis of protein expression in yeast.</title>
        <authorList>
            <person name="Ghaemmaghami S."/>
            <person name="Huh W.-K."/>
            <person name="Bower K."/>
            <person name="Howson R.W."/>
            <person name="Belle A."/>
            <person name="Dephoure N."/>
            <person name="O'Shea E.K."/>
            <person name="Weissman J.S."/>
        </authorList>
    </citation>
    <scope>LEVEL OF PROTEIN EXPRESSION [LARGE SCALE ANALYSIS]</scope>
</reference>
<reference key="7">
    <citation type="journal article" date="2009" name="Science">
        <title>Global analysis of Cdk1 substrate phosphorylation sites provides insights into evolution.</title>
        <authorList>
            <person name="Holt L.J."/>
            <person name="Tuch B.B."/>
            <person name="Villen J."/>
            <person name="Johnson A.D."/>
            <person name="Gygi S.P."/>
            <person name="Morgan D.O."/>
        </authorList>
    </citation>
    <scope>PHOSPHORYLATION [LARGE SCALE ANALYSIS] AT THR-272</scope>
    <scope>IDENTIFICATION BY MASS SPECTROMETRY [LARGE SCALE ANALYSIS]</scope>
</reference>
<comment type="function">
    <text evidence="2">Important for the export of protein containing nuclear export signal (NES) out of the nucleus. Stimulates the GTPase activity of GSP1.</text>
</comment>
<comment type="subunit">
    <text evidence="2">Interacts with GSP1.</text>
</comment>
<comment type="subcellular location">
    <subcellularLocation>
        <location evidence="2">Cytoplasm</location>
    </subcellularLocation>
    <subcellularLocation>
        <location evidence="2">Nucleus</location>
    </subcellularLocation>
    <text>Shuttles between the nucleus and cytoplasm.</text>
</comment>
<comment type="miscellaneous">
    <text evidence="3">Present with 3670 molecules/cell in log phase SD medium.</text>
</comment>
<protein>
    <recommendedName>
        <fullName>Ran-specific GTPase-activating protein 30</fullName>
    </recommendedName>
    <alternativeName>
        <fullName>Ran-binding protein 30</fullName>
        <shortName>RANBP30</shortName>
    </alternativeName>
</protein>
<feature type="chain" id="PRO_0000213672" description="Ran-specific GTPase-activating protein 30">
    <location>
        <begin position="1"/>
        <end position="440"/>
    </location>
</feature>
<feature type="domain" description="RanBD1">
    <location>
        <begin position="1"/>
        <end position="314"/>
    </location>
</feature>
<feature type="region of interest" description="Disordered" evidence="1">
    <location>
        <begin position="341"/>
        <end position="375"/>
    </location>
</feature>
<feature type="compositionally biased region" description="Acidic residues" evidence="1">
    <location>
        <begin position="341"/>
        <end position="371"/>
    </location>
</feature>
<feature type="modified residue" description="Phosphothreonine" evidence="4">
    <location>
        <position position="272"/>
    </location>
</feature>
<proteinExistence type="evidence at protein level"/>
<evidence type="ECO:0000256" key="1">
    <source>
        <dbReference type="SAM" id="MobiDB-lite"/>
    </source>
</evidence>
<evidence type="ECO:0000269" key="2">
    <source>
    </source>
</evidence>
<evidence type="ECO:0000269" key="3">
    <source>
    </source>
</evidence>
<evidence type="ECO:0007744" key="4">
    <source>
    </source>
</evidence>
<keyword id="KW-0963">Cytoplasm</keyword>
<keyword id="KW-0343">GTPase activation</keyword>
<keyword id="KW-0539">Nucleus</keyword>
<keyword id="KW-0597">Phosphoprotein</keyword>
<keyword id="KW-0653">Protein transport</keyword>
<keyword id="KW-1185">Reference proteome</keyword>
<keyword id="KW-0813">Transport</keyword>